<keyword id="KW-0963">Cytoplasm</keyword>
<keyword id="KW-0328">Glycosyltransferase</keyword>
<keyword id="KW-0460">Magnesium</keyword>
<keyword id="KW-0479">Metal-binding</keyword>
<keyword id="KW-0547">Nucleotide-binding</keyword>
<keyword id="KW-0660">Purine salvage</keyword>
<keyword id="KW-0808">Transferase</keyword>
<name>HGPRT_MYCAV</name>
<reference key="1">
    <citation type="submission" date="1997-02" db="EMBL/GenBank/DDBJ databases">
        <authorList>
            <person name="Bergeson S.E."/>
            <person name="Barry R."/>
            <person name="Allen T."/>
            <person name="Hwang H."/>
            <person name="Ullman B."/>
        </authorList>
    </citation>
    <scope>NUCLEOTIDE SEQUENCE [GENOMIC DNA]</scope>
</reference>
<gene>
    <name type="primary">hpt</name>
    <name type="synonym">hprT</name>
</gene>
<proteinExistence type="inferred from homology"/>
<accession>P96794</accession>
<evidence type="ECO:0000250" key="1"/>
<evidence type="ECO:0000250" key="2">
    <source>
        <dbReference type="UniProtKB" id="P0A9M2"/>
    </source>
</evidence>
<evidence type="ECO:0000250" key="3">
    <source>
        <dbReference type="UniProtKB" id="P9WHQ9"/>
    </source>
</evidence>
<evidence type="ECO:0000305" key="4"/>
<feature type="chain" id="PRO_0000139607" description="Hypoxanthine-guanine phosphoribosyltransferase">
    <location>
        <begin position="1"/>
        <end position="203"/>
    </location>
</feature>
<feature type="active site" description="Proton acceptor" evidence="2">
    <location>
        <position position="126"/>
    </location>
</feature>
<feature type="binding site" evidence="3">
    <location>
        <position position="66"/>
    </location>
    <ligand>
        <name>diphosphate</name>
        <dbReference type="ChEBI" id="CHEBI:33019"/>
    </ligand>
</feature>
<feature type="binding site" evidence="3">
    <location>
        <position position="67"/>
    </location>
    <ligand>
        <name>diphosphate</name>
        <dbReference type="ChEBI" id="CHEBI:33019"/>
    </ligand>
</feature>
<feature type="binding site" evidence="3">
    <location>
        <position position="122"/>
    </location>
    <ligand>
        <name>Mg(2+)</name>
        <dbReference type="ChEBI" id="CHEBI:18420"/>
    </ligand>
</feature>
<feature type="binding site" evidence="3">
    <location>
        <position position="123"/>
    </location>
    <ligand>
        <name>Mg(2+)</name>
        <dbReference type="ChEBI" id="CHEBI:18420"/>
    </ligand>
</feature>
<feature type="binding site" evidence="3">
    <location>
        <position position="154"/>
    </location>
    <ligand>
        <name>GMP</name>
        <dbReference type="ChEBI" id="CHEBI:58115"/>
    </ligand>
</feature>
<feature type="binding site" evidence="3">
    <location>
        <begin position="175"/>
        <end position="176"/>
    </location>
    <ligand>
        <name>GMP</name>
        <dbReference type="ChEBI" id="CHEBI:58115"/>
    </ligand>
</feature>
<feature type="binding site" evidence="3">
    <location>
        <position position="182"/>
    </location>
    <ligand>
        <name>GMP</name>
        <dbReference type="ChEBI" id="CHEBI:58115"/>
    </ligand>
</feature>
<feature type="binding site" evidence="3">
    <location>
        <position position="188"/>
    </location>
    <ligand>
        <name>diphosphate</name>
        <dbReference type="ChEBI" id="CHEBI:33019"/>
    </ligand>
</feature>
<sequence length="203" mass="22329">MGVAQISSAITPAQPAELYPGDIKSVLLTAEQIQARIAELGREIGDNYRDAAAETGQDLLLITVLKGAVIFVTDLARAIPLPTQFEFMAVSSYGSSTSSSGVVRILKDLDRDIQGRDVLIVEDVVDSGLTLSWLLRNLSTRHPRSLRVCTLLRKPDARGAHVDIAYVGFDIPNDFVVGYGLDYDERYRDLSYIGTLDPRVYQQ</sequence>
<organism>
    <name type="scientific">Mycobacterium avium</name>
    <dbReference type="NCBI Taxonomy" id="1764"/>
    <lineage>
        <taxon>Bacteria</taxon>
        <taxon>Bacillati</taxon>
        <taxon>Actinomycetota</taxon>
        <taxon>Actinomycetes</taxon>
        <taxon>Mycobacteriales</taxon>
        <taxon>Mycobacteriaceae</taxon>
        <taxon>Mycobacterium</taxon>
        <taxon>Mycobacterium avium complex (MAC)</taxon>
    </lineage>
</organism>
<comment type="function">
    <text evidence="3">Purine salvage pathway enzyme that catalyzes the transfer of the ribosyl-5-phosphate group from 5-phospho-alpha-D-ribose 1-diphosphate (PRPP) to the N9 position of the 6-oxopurines hypoxanthine and guanine to form the corresponding ribonucleotides IMP (inosine 5'-monophosphate) and GMP (guanosine 5'-monophosphate), with the release of PPi.</text>
</comment>
<comment type="catalytic activity">
    <reaction evidence="3">
        <text>IMP + diphosphate = hypoxanthine + 5-phospho-alpha-D-ribose 1-diphosphate</text>
        <dbReference type="Rhea" id="RHEA:17973"/>
        <dbReference type="ChEBI" id="CHEBI:17368"/>
        <dbReference type="ChEBI" id="CHEBI:33019"/>
        <dbReference type="ChEBI" id="CHEBI:58017"/>
        <dbReference type="ChEBI" id="CHEBI:58053"/>
        <dbReference type="EC" id="2.4.2.8"/>
    </reaction>
    <physiologicalReaction direction="right-to-left" evidence="3">
        <dbReference type="Rhea" id="RHEA:17975"/>
    </physiologicalReaction>
</comment>
<comment type="catalytic activity">
    <reaction evidence="3">
        <text>GMP + diphosphate = guanine + 5-phospho-alpha-D-ribose 1-diphosphate</text>
        <dbReference type="Rhea" id="RHEA:25424"/>
        <dbReference type="ChEBI" id="CHEBI:16235"/>
        <dbReference type="ChEBI" id="CHEBI:33019"/>
        <dbReference type="ChEBI" id="CHEBI:58017"/>
        <dbReference type="ChEBI" id="CHEBI:58115"/>
        <dbReference type="EC" id="2.4.2.8"/>
    </reaction>
    <physiologicalReaction direction="right-to-left" evidence="3">
        <dbReference type="Rhea" id="RHEA:25426"/>
    </physiologicalReaction>
</comment>
<comment type="cofactor">
    <cofactor evidence="3">
        <name>Mg(2+)</name>
        <dbReference type="ChEBI" id="CHEBI:18420"/>
    </cofactor>
</comment>
<comment type="pathway">
    <text evidence="3">Purine metabolism; IMP biosynthesis via salvage pathway; IMP from hypoxanthine: step 1/1.</text>
</comment>
<comment type="pathway">
    <text evidence="3">Purine metabolism; GMP biosynthesis via salvage pathway; GMP from guanine: step 1/1.</text>
</comment>
<comment type="subcellular location">
    <subcellularLocation>
        <location evidence="1">Cytoplasm</location>
    </subcellularLocation>
</comment>
<comment type="similarity">
    <text evidence="4">Belongs to the purine/pyrimidine phosphoribosyltransferase family.</text>
</comment>
<protein>
    <recommendedName>
        <fullName>Hypoxanthine-guanine phosphoribosyltransferase</fullName>
        <shortName>HGPRT</shortName>
        <shortName>HGPRTase</shortName>
        <ecNumber evidence="3">2.4.2.8</ecNumber>
    </recommendedName>
</protein>
<dbReference type="EC" id="2.4.2.8" evidence="3"/>
<dbReference type="EMBL" id="U88875">
    <property type="protein sequence ID" value="AAB48623.1"/>
    <property type="molecule type" value="Genomic_DNA"/>
</dbReference>
<dbReference type="SMR" id="P96794"/>
<dbReference type="UniPathway" id="UPA00591">
    <property type="reaction ID" value="UER00648"/>
</dbReference>
<dbReference type="UniPathway" id="UPA00909">
    <property type="reaction ID" value="UER00887"/>
</dbReference>
<dbReference type="GO" id="GO:0005829">
    <property type="term" value="C:cytosol"/>
    <property type="evidence" value="ECO:0007669"/>
    <property type="project" value="TreeGrafter"/>
</dbReference>
<dbReference type="GO" id="GO:0052657">
    <property type="term" value="F:guanine phosphoribosyltransferase activity"/>
    <property type="evidence" value="ECO:0007669"/>
    <property type="project" value="RHEA"/>
</dbReference>
<dbReference type="GO" id="GO:0004422">
    <property type="term" value="F:hypoxanthine phosphoribosyltransferase activity"/>
    <property type="evidence" value="ECO:0007669"/>
    <property type="project" value="InterPro"/>
</dbReference>
<dbReference type="GO" id="GO:0000287">
    <property type="term" value="F:magnesium ion binding"/>
    <property type="evidence" value="ECO:0007669"/>
    <property type="project" value="TreeGrafter"/>
</dbReference>
<dbReference type="GO" id="GO:0000166">
    <property type="term" value="F:nucleotide binding"/>
    <property type="evidence" value="ECO:0007669"/>
    <property type="project" value="UniProtKB-KW"/>
</dbReference>
<dbReference type="GO" id="GO:0032263">
    <property type="term" value="P:GMP salvage"/>
    <property type="evidence" value="ECO:0007669"/>
    <property type="project" value="UniProtKB-UniPathway"/>
</dbReference>
<dbReference type="GO" id="GO:0006178">
    <property type="term" value="P:guanine salvage"/>
    <property type="evidence" value="ECO:0007669"/>
    <property type="project" value="TreeGrafter"/>
</dbReference>
<dbReference type="GO" id="GO:0046100">
    <property type="term" value="P:hypoxanthine metabolic process"/>
    <property type="evidence" value="ECO:0007669"/>
    <property type="project" value="TreeGrafter"/>
</dbReference>
<dbReference type="GO" id="GO:0032264">
    <property type="term" value="P:IMP salvage"/>
    <property type="evidence" value="ECO:0007669"/>
    <property type="project" value="UniProtKB-UniPathway"/>
</dbReference>
<dbReference type="GO" id="GO:0006166">
    <property type="term" value="P:purine ribonucleoside salvage"/>
    <property type="evidence" value="ECO:0007669"/>
    <property type="project" value="UniProtKB-KW"/>
</dbReference>
<dbReference type="CDD" id="cd06223">
    <property type="entry name" value="PRTases_typeI"/>
    <property type="match status" value="1"/>
</dbReference>
<dbReference type="FunFam" id="3.40.50.2020:FF:000006">
    <property type="entry name" value="Hypoxanthine phosphoribosyltransferase"/>
    <property type="match status" value="1"/>
</dbReference>
<dbReference type="Gene3D" id="3.40.50.2020">
    <property type="match status" value="1"/>
</dbReference>
<dbReference type="InterPro" id="IPR050408">
    <property type="entry name" value="HGPRT"/>
</dbReference>
<dbReference type="InterPro" id="IPR005904">
    <property type="entry name" value="Hxn_phspho_trans"/>
</dbReference>
<dbReference type="InterPro" id="IPR000836">
    <property type="entry name" value="PRibTrfase_dom"/>
</dbReference>
<dbReference type="InterPro" id="IPR029057">
    <property type="entry name" value="PRTase-like"/>
</dbReference>
<dbReference type="NCBIfam" id="TIGR01203">
    <property type="entry name" value="HGPRTase"/>
    <property type="match status" value="1"/>
</dbReference>
<dbReference type="PANTHER" id="PTHR43340:SF1">
    <property type="entry name" value="HYPOXANTHINE PHOSPHORIBOSYLTRANSFERASE"/>
    <property type="match status" value="1"/>
</dbReference>
<dbReference type="PANTHER" id="PTHR43340">
    <property type="entry name" value="HYPOXANTHINE-GUANINE PHOSPHORIBOSYLTRANSFERASE"/>
    <property type="match status" value="1"/>
</dbReference>
<dbReference type="Pfam" id="PF00156">
    <property type="entry name" value="Pribosyltran"/>
    <property type="match status" value="1"/>
</dbReference>
<dbReference type="SUPFAM" id="SSF53271">
    <property type="entry name" value="PRTase-like"/>
    <property type="match status" value="1"/>
</dbReference>
<dbReference type="PROSITE" id="PS00103">
    <property type="entry name" value="PUR_PYR_PR_TRANSFER"/>
    <property type="match status" value="1"/>
</dbReference>